<name>RL31B_CUPTR</name>
<accession>B3R1N6</accession>
<reference key="1">
    <citation type="journal article" date="2008" name="Genome Res.">
        <title>Genome sequence of the beta-rhizobium Cupriavidus taiwanensis and comparative genomics of rhizobia.</title>
        <authorList>
            <person name="Amadou C."/>
            <person name="Pascal G."/>
            <person name="Mangenot S."/>
            <person name="Glew M."/>
            <person name="Bontemps C."/>
            <person name="Capela D."/>
            <person name="Carrere S."/>
            <person name="Cruveiller S."/>
            <person name="Dossat C."/>
            <person name="Lajus A."/>
            <person name="Marchetti M."/>
            <person name="Poinsot V."/>
            <person name="Rouy Z."/>
            <person name="Servin B."/>
            <person name="Saad M."/>
            <person name="Schenowitz C."/>
            <person name="Barbe V."/>
            <person name="Batut J."/>
            <person name="Medigue C."/>
            <person name="Masson-Boivin C."/>
        </authorList>
    </citation>
    <scope>NUCLEOTIDE SEQUENCE [LARGE SCALE GENOMIC DNA]</scope>
    <source>
        <strain>DSM 17343 / BCRC 17206 / CCUG 44338 / CIP 107171 / LMG 19424 / R1</strain>
    </source>
</reference>
<proteinExistence type="inferred from homology"/>
<organism>
    <name type="scientific">Cupriavidus taiwanensis (strain DSM 17343 / BCRC 17206 / CCUG 44338 / CIP 107171 / LMG 19424 / R1)</name>
    <name type="common">Ralstonia taiwanensis (strain LMG 19424)</name>
    <dbReference type="NCBI Taxonomy" id="977880"/>
    <lineage>
        <taxon>Bacteria</taxon>
        <taxon>Pseudomonadati</taxon>
        <taxon>Pseudomonadota</taxon>
        <taxon>Betaproteobacteria</taxon>
        <taxon>Burkholderiales</taxon>
        <taxon>Burkholderiaceae</taxon>
        <taxon>Cupriavidus</taxon>
    </lineage>
</organism>
<evidence type="ECO:0000255" key="1">
    <source>
        <dbReference type="HAMAP-Rule" id="MF_00502"/>
    </source>
</evidence>
<evidence type="ECO:0000305" key="2"/>
<keyword id="KW-0687">Ribonucleoprotein</keyword>
<keyword id="KW-0689">Ribosomal protein</keyword>
<dbReference type="EMBL" id="CU633749">
    <property type="protein sequence ID" value="CAQ69884.1"/>
    <property type="molecule type" value="Genomic_DNA"/>
</dbReference>
<dbReference type="RefSeq" id="WP_012353195.1">
    <property type="nucleotide sequence ID" value="NC_010528.1"/>
</dbReference>
<dbReference type="SMR" id="B3R1N6"/>
<dbReference type="GeneID" id="29762793"/>
<dbReference type="KEGG" id="cti:RALTA_A1943"/>
<dbReference type="eggNOG" id="COG0254">
    <property type="taxonomic scope" value="Bacteria"/>
</dbReference>
<dbReference type="HOGENOM" id="CLU_114306_2_2_4"/>
<dbReference type="BioCyc" id="CTAI977880:RALTA_RS09375-MONOMER"/>
<dbReference type="Proteomes" id="UP000001692">
    <property type="component" value="Chromosome 1"/>
</dbReference>
<dbReference type="GO" id="GO:1990904">
    <property type="term" value="C:ribonucleoprotein complex"/>
    <property type="evidence" value="ECO:0007669"/>
    <property type="project" value="UniProtKB-KW"/>
</dbReference>
<dbReference type="GO" id="GO:0005840">
    <property type="term" value="C:ribosome"/>
    <property type="evidence" value="ECO:0007669"/>
    <property type="project" value="UniProtKB-KW"/>
</dbReference>
<dbReference type="GO" id="GO:0003735">
    <property type="term" value="F:structural constituent of ribosome"/>
    <property type="evidence" value="ECO:0007669"/>
    <property type="project" value="InterPro"/>
</dbReference>
<dbReference type="GO" id="GO:0006412">
    <property type="term" value="P:translation"/>
    <property type="evidence" value="ECO:0007669"/>
    <property type="project" value="UniProtKB-UniRule"/>
</dbReference>
<dbReference type="Gene3D" id="4.10.830.30">
    <property type="entry name" value="Ribosomal protein L31"/>
    <property type="match status" value="1"/>
</dbReference>
<dbReference type="HAMAP" id="MF_00502">
    <property type="entry name" value="Ribosomal_bL31_2"/>
    <property type="match status" value="1"/>
</dbReference>
<dbReference type="InterPro" id="IPR034704">
    <property type="entry name" value="Ribosomal_bL28/bL31-like_sf"/>
</dbReference>
<dbReference type="InterPro" id="IPR002150">
    <property type="entry name" value="Ribosomal_bL31"/>
</dbReference>
<dbReference type="InterPro" id="IPR027493">
    <property type="entry name" value="Ribosomal_bL31_B"/>
</dbReference>
<dbReference type="InterPro" id="IPR042105">
    <property type="entry name" value="Ribosomal_bL31_sf"/>
</dbReference>
<dbReference type="NCBIfam" id="TIGR00105">
    <property type="entry name" value="L31"/>
    <property type="match status" value="1"/>
</dbReference>
<dbReference type="NCBIfam" id="NF002462">
    <property type="entry name" value="PRK01678.1"/>
    <property type="match status" value="1"/>
</dbReference>
<dbReference type="PANTHER" id="PTHR33280">
    <property type="entry name" value="50S RIBOSOMAL PROTEIN L31, CHLOROPLASTIC"/>
    <property type="match status" value="1"/>
</dbReference>
<dbReference type="PANTHER" id="PTHR33280:SF1">
    <property type="entry name" value="LARGE RIBOSOMAL SUBUNIT PROTEIN BL31C"/>
    <property type="match status" value="1"/>
</dbReference>
<dbReference type="Pfam" id="PF01197">
    <property type="entry name" value="Ribosomal_L31"/>
    <property type="match status" value="1"/>
</dbReference>
<dbReference type="PRINTS" id="PR01249">
    <property type="entry name" value="RIBOSOMALL31"/>
</dbReference>
<dbReference type="SUPFAM" id="SSF143800">
    <property type="entry name" value="L28p-like"/>
    <property type="match status" value="1"/>
</dbReference>
<dbReference type="PROSITE" id="PS01143">
    <property type="entry name" value="RIBOSOMAL_L31"/>
    <property type="match status" value="1"/>
</dbReference>
<protein>
    <recommendedName>
        <fullName evidence="1">Large ribosomal subunit protein bL31B</fullName>
    </recommendedName>
    <alternativeName>
        <fullName evidence="2">50S ribosomal protein L31 type B</fullName>
    </alternativeName>
</protein>
<comment type="subunit">
    <text evidence="1">Part of the 50S ribosomal subunit.</text>
</comment>
<comment type="similarity">
    <text evidence="1">Belongs to the bacterial ribosomal protein bL31 family. Type B subfamily.</text>
</comment>
<feature type="chain" id="PRO_1000126800" description="Large ribosomal subunit protein bL31B">
    <location>
        <begin position="1"/>
        <end position="86"/>
    </location>
</feature>
<sequence>MKEGIHPNYREVVFQDMSSDFSFITRSTIQTKDTIVKDGKEYPLAKIEVSSESHPFYTGTQKIMDTAGRVEKFRQKFGNKLGKAAK</sequence>
<gene>
    <name evidence="1" type="primary">rpmE2</name>
    <name type="ordered locus">RALTA_A1943</name>
</gene>